<dbReference type="EMBL" id="AC069556">
    <property type="status" value="NOT_ANNOTATED_CDS"/>
    <property type="molecule type" value="Genomic_DNA"/>
</dbReference>
<dbReference type="EMBL" id="CP002688">
    <property type="protein sequence ID" value="ANM69523.1"/>
    <property type="molecule type" value="Genomic_DNA"/>
</dbReference>
<dbReference type="RefSeq" id="NP_001331193.1">
    <property type="nucleotide sequence ID" value="NM_001344039.1"/>
</dbReference>
<dbReference type="EnsemblPlants" id="AT5G27765.1">
    <property type="protein sequence ID" value="AT5G27765.1"/>
    <property type="gene ID" value="AT5G27765"/>
</dbReference>
<dbReference type="GeneID" id="28721204"/>
<dbReference type="Gramene" id="AT5G27765.1">
    <property type="protein sequence ID" value="AT5G27765.1"/>
    <property type="gene ID" value="AT5G27765"/>
</dbReference>
<dbReference type="KEGG" id="ath:AT5G27765"/>
<dbReference type="Araport" id="AT5G27765"/>
<dbReference type="TAIR" id="AT5G27765"/>
<dbReference type="InParanoid" id="A0A1P8BD36"/>
<dbReference type="OMA" id="MCNIVVF"/>
<dbReference type="PRO" id="PR:A0A1P8BD36"/>
<dbReference type="Proteomes" id="UP000006548">
    <property type="component" value="Chromosome 5"/>
</dbReference>
<dbReference type="ExpressionAtlas" id="A0A1P8BD36">
    <property type="expression patterns" value="baseline and differential"/>
</dbReference>
<dbReference type="GO" id="GO:0048046">
    <property type="term" value="C:apoplast"/>
    <property type="evidence" value="ECO:0000250"/>
    <property type="project" value="UniProtKB"/>
</dbReference>
<dbReference type="GO" id="GO:0005886">
    <property type="term" value="C:plasma membrane"/>
    <property type="evidence" value="ECO:0007669"/>
    <property type="project" value="UniProtKB-SubCell"/>
</dbReference>
<dbReference type="GO" id="GO:0030275">
    <property type="term" value="F:LRR domain binding"/>
    <property type="evidence" value="ECO:0000250"/>
    <property type="project" value="UniProtKB"/>
</dbReference>
<dbReference type="GO" id="GO:0033612">
    <property type="term" value="F:receptor serine/threonine kinase binding"/>
    <property type="evidence" value="ECO:0000250"/>
    <property type="project" value="UniProtKB"/>
</dbReference>
<name>SOP19_ARATH</name>
<keyword id="KW-0052">Apoplast</keyword>
<keyword id="KW-1003">Cell membrane</keyword>
<keyword id="KW-0165">Cleavage on pair of basic residues</keyword>
<keyword id="KW-0472">Membrane</keyword>
<keyword id="KW-1185">Reference proteome</keyword>
<keyword id="KW-0964">Secreted</keyword>
<keyword id="KW-0732">Signal</keyword>
<organism>
    <name type="scientific">Arabidopsis thaliana</name>
    <name type="common">Mouse-ear cress</name>
    <dbReference type="NCBI Taxonomy" id="3702"/>
    <lineage>
        <taxon>Eukaryota</taxon>
        <taxon>Viridiplantae</taxon>
        <taxon>Streptophyta</taxon>
        <taxon>Embryophyta</taxon>
        <taxon>Tracheophyta</taxon>
        <taxon>Spermatophyta</taxon>
        <taxon>Magnoliopsida</taxon>
        <taxon>eudicotyledons</taxon>
        <taxon>Gunneridae</taxon>
        <taxon>Pentapetalae</taxon>
        <taxon>rosids</taxon>
        <taxon>malvids</taxon>
        <taxon>Brassicales</taxon>
        <taxon>Brassicaceae</taxon>
        <taxon>Camelineae</taxon>
        <taxon>Arabidopsis</taxon>
    </lineage>
</organism>
<evidence type="ECO:0000250" key="1">
    <source>
        <dbReference type="UniProtKB" id="B3H7I1"/>
    </source>
</evidence>
<evidence type="ECO:0000255" key="2"/>
<evidence type="ECO:0000256" key="3">
    <source>
        <dbReference type="SAM" id="MobiDB-lite"/>
    </source>
</evidence>
<evidence type="ECO:0000303" key="4">
    <source>
    </source>
</evidence>
<evidence type="ECO:0000305" key="5"/>
<evidence type="ECO:0000305" key="6">
    <source>
    </source>
</evidence>
<evidence type="ECO:0000312" key="7">
    <source>
        <dbReference type="Araport" id="AT5G27765"/>
    </source>
</evidence>
<evidence type="ECO:0000312" key="8">
    <source>
        <dbReference type="EMBL" id="AC069556"/>
    </source>
</evidence>
<comment type="function">
    <text evidence="1">Brassicaceae-specific phytocytokine (plant endogenous peptide released into the apoplast) perceived by MIK2 in a BAK1/SERK3 and SERK4 coreceptors-dependent manner, that modulates various physiological and antimicrobial processes including growth prevention and reactive oxygen species (ROS) response regulation.</text>
</comment>
<comment type="subunit">
    <text evidence="1">Interacts with MIK2 (via extracellular leucine-rich repeat domain); this interaction triggers the formation of complex between MIK2 and the BAK1/SERK3 and SERK4 coreceptors, and subsequent BAK1 activation by phosphorylation.</text>
</comment>
<comment type="subcellular location">
    <subcellularLocation>
        <location evidence="1">Cell membrane</location>
    </subcellularLocation>
    <subcellularLocation>
        <location evidence="1">Secreted</location>
        <location evidence="1">Extracellular space</location>
        <location evidence="1">Apoplast</location>
    </subcellularLocation>
    <text evidence="1">The precursor of SCOOP19, PROSCOOP19, accumulates at the plasma membrane and is proteolytically cleaved to release the SCOOP19 in the apoplasm.</text>
</comment>
<comment type="similarity">
    <text evidence="5">Belongs to the serine rich endogenous peptide (SCOOP) phytocytokine family.</text>
</comment>
<accession>A0A1P8BD36</accession>
<proteinExistence type="inferred from homology"/>
<reference key="1">
    <citation type="journal article" date="2000" name="Nature">
        <title>Sequence and analysis of chromosome 5 of the plant Arabidopsis thaliana.</title>
        <authorList>
            <person name="Tabata S."/>
            <person name="Kaneko T."/>
            <person name="Nakamura Y."/>
            <person name="Kotani H."/>
            <person name="Kato T."/>
            <person name="Asamizu E."/>
            <person name="Miyajima N."/>
            <person name="Sasamoto S."/>
            <person name="Kimura T."/>
            <person name="Hosouchi T."/>
            <person name="Kawashima K."/>
            <person name="Kohara M."/>
            <person name="Matsumoto M."/>
            <person name="Matsuno A."/>
            <person name="Muraki A."/>
            <person name="Nakayama S."/>
            <person name="Nakazaki N."/>
            <person name="Naruo K."/>
            <person name="Okumura S."/>
            <person name="Shinpo S."/>
            <person name="Takeuchi C."/>
            <person name="Wada T."/>
            <person name="Watanabe A."/>
            <person name="Yamada M."/>
            <person name="Yasuda M."/>
            <person name="Sato S."/>
            <person name="de la Bastide M."/>
            <person name="Huang E."/>
            <person name="Spiegel L."/>
            <person name="Gnoj L."/>
            <person name="O'Shaughnessy A."/>
            <person name="Preston R."/>
            <person name="Habermann K."/>
            <person name="Murray J."/>
            <person name="Johnson D."/>
            <person name="Rohlfing T."/>
            <person name="Nelson J."/>
            <person name="Stoneking T."/>
            <person name="Pepin K."/>
            <person name="Spieth J."/>
            <person name="Sekhon M."/>
            <person name="Armstrong J."/>
            <person name="Becker M."/>
            <person name="Belter E."/>
            <person name="Cordum H."/>
            <person name="Cordes M."/>
            <person name="Courtney L."/>
            <person name="Courtney W."/>
            <person name="Dante M."/>
            <person name="Du H."/>
            <person name="Edwards J."/>
            <person name="Fryman J."/>
            <person name="Haakensen B."/>
            <person name="Lamar E."/>
            <person name="Latreille P."/>
            <person name="Leonard S."/>
            <person name="Meyer R."/>
            <person name="Mulvaney E."/>
            <person name="Ozersky P."/>
            <person name="Riley A."/>
            <person name="Strowmatt C."/>
            <person name="Wagner-McPherson C."/>
            <person name="Wollam A."/>
            <person name="Yoakum M."/>
            <person name="Bell M."/>
            <person name="Dedhia N."/>
            <person name="Parnell L."/>
            <person name="Shah R."/>
            <person name="Rodriguez M."/>
            <person name="Hoon See L."/>
            <person name="Vil D."/>
            <person name="Baker J."/>
            <person name="Kirchoff K."/>
            <person name="Toth K."/>
            <person name="King L."/>
            <person name="Bahret A."/>
            <person name="Miller B."/>
            <person name="Marra M.A."/>
            <person name="Martienssen R."/>
            <person name="McCombie W.R."/>
            <person name="Wilson R.K."/>
            <person name="Murphy G."/>
            <person name="Bancroft I."/>
            <person name="Volckaert G."/>
            <person name="Wambutt R."/>
            <person name="Duesterhoeft A."/>
            <person name="Stiekema W."/>
            <person name="Pohl T."/>
            <person name="Entian K.-D."/>
            <person name="Terryn N."/>
            <person name="Hartley N."/>
            <person name="Bent E."/>
            <person name="Johnson S."/>
            <person name="Langham S.-A."/>
            <person name="McCullagh B."/>
            <person name="Robben J."/>
            <person name="Grymonprez B."/>
            <person name="Zimmermann W."/>
            <person name="Ramsperger U."/>
            <person name="Wedler H."/>
            <person name="Balke K."/>
            <person name="Wedler E."/>
            <person name="Peters S."/>
            <person name="van Staveren M."/>
            <person name="Dirkse W."/>
            <person name="Mooijman P."/>
            <person name="Klein Lankhorst R."/>
            <person name="Weitzenegger T."/>
            <person name="Bothe G."/>
            <person name="Rose M."/>
            <person name="Hauf J."/>
            <person name="Berneiser S."/>
            <person name="Hempel S."/>
            <person name="Feldpausch M."/>
            <person name="Lamberth S."/>
            <person name="Villarroel R."/>
            <person name="Gielen J."/>
            <person name="Ardiles W."/>
            <person name="Bents O."/>
            <person name="Lemcke K."/>
            <person name="Kolesov G."/>
            <person name="Mayer K.F.X."/>
            <person name="Rudd S."/>
            <person name="Schoof H."/>
            <person name="Schueller C."/>
            <person name="Zaccaria P."/>
            <person name="Mewes H.-W."/>
            <person name="Bevan M."/>
            <person name="Fransz P.F."/>
        </authorList>
    </citation>
    <scope>NUCLEOTIDE SEQUENCE [LARGE SCALE GENOMIC DNA]</scope>
    <source>
        <strain>cv. Columbia</strain>
    </source>
</reference>
<reference key="2">
    <citation type="journal article" date="2017" name="Plant J.">
        <title>Araport11: a complete reannotation of the Arabidopsis thaliana reference genome.</title>
        <authorList>
            <person name="Cheng C.Y."/>
            <person name="Krishnakumar V."/>
            <person name="Chan A.P."/>
            <person name="Thibaud-Nissen F."/>
            <person name="Schobel S."/>
            <person name="Town C.D."/>
        </authorList>
    </citation>
    <scope>GENOME REANNOTATION</scope>
    <source>
        <strain>cv. Columbia</strain>
    </source>
</reference>
<reference key="3">
    <citation type="journal article" date="2019" name="J. Exp. Bot.">
        <title>The SCOOP12 peptide regulates defense response and root elongation in Arabidopsis thaliana.</title>
        <authorList>
            <person name="Gully K."/>
            <person name="Pelletier S."/>
            <person name="Guillou M.-C."/>
            <person name="Ferrand M."/>
            <person name="Aligon S."/>
            <person name="Pokotylo I."/>
            <person name="Perrin A."/>
            <person name="Vergne E."/>
            <person name="Fagard M."/>
            <person name="Ruelland E."/>
            <person name="Grappin P."/>
            <person name="Bucher E."/>
            <person name="Renou J.-P."/>
            <person name="Aubourg S."/>
        </authorList>
    </citation>
    <scope>GENE FAMILY</scope>
    <source>
        <strain>cv. Columbia</strain>
        <strain>cv. Wassilewskija</strain>
    </source>
</reference>
<reference key="4">
    <citation type="journal article" date="2021" name="Nat. Commun.">
        <title>The Arabidopsis MIK2 receptor elicits immunity by sensing a conserved signature from phytocytokines and microbes.</title>
        <authorList>
            <person name="Hou S."/>
            <person name="Liu D."/>
            <person name="Huang S."/>
            <person name="Luo D."/>
            <person name="Liu Z."/>
            <person name="Xiang Q."/>
            <person name="Wang P."/>
            <person name="Mu R."/>
            <person name="Han Z."/>
            <person name="Chen S."/>
            <person name="Chai J."/>
            <person name="Shan L."/>
            <person name="He P."/>
        </authorList>
    </citation>
    <scope>GENE FAMILY</scope>
    <scope>NOMENCLATURE</scope>
    <source>
        <strain>cv. Columbia</strain>
    </source>
</reference>
<sequence length="78" mass="8903">MCNIVVFLLTLTLFLFSGLSNTAFARVQYEPLKPKFGARVWDQKMIKNIKIEVDGSCSRRAPGRRRPPNRPPKPCTKP</sequence>
<feature type="signal peptide" evidence="2">
    <location>
        <begin position="1"/>
        <end position="25"/>
    </location>
</feature>
<feature type="propeptide" id="PRO_0000457250" description="Removed in mature form" evidence="1">
    <location>
        <begin position="26"/>
        <end status="unknown"/>
    </location>
</feature>
<feature type="peptide" id="PRO_0000457251" description="Serine rich endogenous peptide 19" evidence="1">
    <location>
        <begin status="unknown"/>
        <end position="78"/>
    </location>
</feature>
<feature type="region of interest" description="Disordered" evidence="3">
    <location>
        <begin position="57"/>
        <end position="78"/>
    </location>
</feature>
<feature type="short sequence motif" description="SCOOP motif" evidence="6">
    <location>
        <begin position="50"/>
        <end position="64"/>
    </location>
</feature>
<feature type="short sequence motif" description="SxS motif essential for MIK2 binding" evidence="1">
    <location>
        <begin position="56"/>
        <end position="58"/>
    </location>
</feature>
<feature type="compositionally biased region" description="Pro residues" evidence="3">
    <location>
        <begin position="69"/>
        <end position="78"/>
    </location>
</feature>
<gene>
    <name evidence="4" type="primary">PROSCOOP19</name>
    <name evidence="4" type="synonym">SCOOP19</name>
    <name evidence="7" type="ordered locus">At5g27765</name>
    <name evidence="8" type="ORF">T1G16</name>
</gene>
<protein>
    <recommendedName>
        <fullName evidence="4">Serine rich endogenous peptide 19</fullName>
        <shortName evidence="4">AtSCOOP19</shortName>
    </recommendedName>
    <alternativeName>
        <fullName evidence="4">Phytocytokine SCOOP19</fullName>
    </alternativeName>
    <alternativeName>
        <fullName evidence="4">Precursor of serine rich endogenous peptide phytocytokine 19</fullName>
    </alternativeName>
</protein>